<dbReference type="EMBL" id="Z49810">
    <property type="protein sequence ID" value="CAA89949.1"/>
    <property type="molecule type" value="Genomic_DNA"/>
</dbReference>
<dbReference type="EMBL" id="AY268136">
    <property type="protein sequence ID" value="AAR26282.1"/>
    <property type="molecule type" value="Genomic_DNA"/>
</dbReference>
<dbReference type="EMBL" id="BK006946">
    <property type="protein sequence ID" value="DAA09896.1"/>
    <property type="molecule type" value="Genomic_DNA"/>
</dbReference>
<dbReference type="PIR" id="S55116">
    <property type="entry name" value="S55116"/>
</dbReference>
<dbReference type="BioGRID" id="35168">
    <property type="interactions" value="79"/>
</dbReference>
<dbReference type="FunCoup" id="P0CF16">
    <property type="interactions" value="40"/>
</dbReference>
<dbReference type="STRING" id="4932.YML003W"/>
<dbReference type="PaxDb" id="4932-YML003W"/>
<dbReference type="EnsemblFungi" id="YML003W_mRNA">
    <property type="protein sequence ID" value="YML003W"/>
    <property type="gene ID" value="YML003W"/>
</dbReference>
<dbReference type="GeneID" id="855010"/>
<dbReference type="KEGG" id="sce:YML003W"/>
<dbReference type="AGR" id="SGD:S000004462"/>
<dbReference type="SGD" id="S000004462">
    <property type="gene designation" value="YML003W"/>
</dbReference>
<dbReference type="VEuPathDB" id="FungiDB:YML003W"/>
<dbReference type="eggNOG" id="ENOG502R3ZQ">
    <property type="taxonomic scope" value="Eukaryota"/>
</dbReference>
<dbReference type="HOGENOM" id="CLU_960446_0_0_1"/>
<dbReference type="InParanoid" id="P0CF16"/>
<dbReference type="OrthoDB" id="7464126at2759"/>
<dbReference type="BioCyc" id="YEAST:G3O-32609-MONOMER"/>
<dbReference type="BioGRID-ORCS" id="855010">
    <property type="hits" value="0 hits in 10 CRISPR screens"/>
</dbReference>
<dbReference type="PRO" id="PR:P0CF16"/>
<dbReference type="Proteomes" id="UP000002311">
    <property type="component" value="Chromosome XIII"/>
</dbReference>
<dbReference type="RNAct" id="P0CF16">
    <property type="molecule type" value="protein"/>
</dbReference>
<dbReference type="InterPro" id="IPR051248">
    <property type="entry name" value="UPF0507/Ank_repeat_27"/>
</dbReference>
<dbReference type="PANTHER" id="PTHR24170">
    <property type="entry name" value="ANKYRIN REPEAT DOMAIN-CONTAINING PROTEIN 27"/>
    <property type="match status" value="1"/>
</dbReference>
<dbReference type="PANTHER" id="PTHR24170:SF1">
    <property type="entry name" value="DOMAIN PROTEIN, PUTATIVE (AFU_ORTHOLOGUE AFUA_1G09870)-RELATED"/>
    <property type="match status" value="1"/>
</dbReference>
<sequence length="290" mass="33971">MSVYHLPTLLNPLVNAIFNCPEPERSPLKKLFANLKTRRFILLAPPSEYLLNYHDVKSKLPLHDLCYNAEFINSYILLMTENSYINTNSRDSHYETLDGKTVVIQWKNNVIHALNGFHIRRRLKILETKILPNFNDYFEGAADFIILFIDQPLNCEFVPNDYLQCFHNYEKIPKNAHAMPNLSIDSFQQERSSFENILHIHPARLTQLGQLFSSYRTLAPGDDPSRSIFESIVQQAFDGMKSDSLFKNFSNLYDLIHDYFELNLYDDIWSRLTTHFKGHEVDTEKINIFQ</sequence>
<keyword id="KW-1185">Reference proteome</keyword>
<organism>
    <name type="scientific">Saccharomyces cerevisiae (strain ATCC 204508 / S288c)</name>
    <name type="common">Baker's yeast</name>
    <dbReference type="NCBI Taxonomy" id="559292"/>
    <lineage>
        <taxon>Eukaryota</taxon>
        <taxon>Fungi</taxon>
        <taxon>Dikarya</taxon>
        <taxon>Ascomycota</taxon>
        <taxon>Saccharomycotina</taxon>
        <taxon>Saccharomycetes</taxon>
        <taxon>Saccharomycetales</taxon>
        <taxon>Saccharomycetaceae</taxon>
        <taxon>Saccharomyces</taxon>
    </lineage>
</organism>
<evidence type="ECO:0000305" key="1"/>
<gene>
    <name type="ordered locus">YML003W</name>
    <name type="ORF">YM9571.16</name>
</gene>
<reference key="1">
    <citation type="journal article" date="1997" name="Nature">
        <title>The nucleotide sequence of Saccharomyces cerevisiae chromosome XIII.</title>
        <authorList>
            <person name="Bowman S."/>
            <person name="Churcher C.M."/>
            <person name="Badcock K."/>
            <person name="Brown D."/>
            <person name="Chillingworth T."/>
            <person name="Connor R."/>
            <person name="Dedman K."/>
            <person name="Devlin K."/>
            <person name="Gentles S."/>
            <person name="Hamlin N."/>
            <person name="Hunt S."/>
            <person name="Jagels K."/>
            <person name="Lye G."/>
            <person name="Moule S."/>
            <person name="Odell C."/>
            <person name="Pearson D."/>
            <person name="Rajandream M.A."/>
            <person name="Rice P."/>
            <person name="Skelton J."/>
            <person name="Walsh S.V."/>
            <person name="Whitehead S."/>
            <person name="Barrell B.G."/>
        </authorList>
    </citation>
    <scope>NUCLEOTIDE SEQUENCE [LARGE SCALE GENOMIC DNA]</scope>
    <source>
        <strain>ATCC 204508 / S288c</strain>
    </source>
</reference>
<reference key="2">
    <citation type="journal article" date="2014" name="G3 (Bethesda)">
        <title>The reference genome sequence of Saccharomyces cerevisiae: Then and now.</title>
        <authorList>
            <person name="Engel S.R."/>
            <person name="Dietrich F.S."/>
            <person name="Fisk D.G."/>
            <person name="Binkley G."/>
            <person name="Balakrishnan R."/>
            <person name="Costanzo M.C."/>
            <person name="Dwight S.S."/>
            <person name="Hitz B.C."/>
            <person name="Karra K."/>
            <person name="Nash R.S."/>
            <person name="Weng S."/>
            <person name="Wong E.D."/>
            <person name="Lloyd P."/>
            <person name="Skrzypek M.S."/>
            <person name="Miyasato S.R."/>
            <person name="Simison M."/>
            <person name="Cherry J.M."/>
        </authorList>
    </citation>
    <scope>GENOME REANNOTATION</scope>
    <source>
        <strain>ATCC 204508 / S288c</strain>
    </source>
</reference>
<reference key="3">
    <citation type="journal article" date="2003" name="Genome Biol.">
        <title>Reinvestigation of the Saccharomyces cerevisiae genome annotation by comparison to the genome of a related fungus: Ashbya gossypii.</title>
        <authorList>
            <person name="Brachat S."/>
            <person name="Dietrich F.S."/>
            <person name="Voegeli S."/>
            <person name="Zhang Z."/>
            <person name="Stuart L."/>
            <person name="Lerch A."/>
            <person name="Gates K."/>
            <person name="Gaffney T.D."/>
            <person name="Philippsen P."/>
        </authorList>
    </citation>
    <scope>NUCLEOTIDE SEQUENCE [GENOMIC DNA] OF 262-290</scope>
    <scope>CONFIRMATION OF FRAMESHIFT</scope>
    <source>
        <strain>ATCC 204511 / S288c / AB972</strain>
    </source>
</reference>
<feature type="chain" id="PRO_0000203265" description="UPF0507 protein YML003W">
    <location>
        <begin position="1"/>
        <end position="290"/>
    </location>
</feature>
<comment type="similarity">
    <text evidence="1">Belongs to the UPF0507 family.</text>
</comment>
<comment type="caution">
    <text evidence="1">This is a truncated version of an UPF0507 family protein. Strain S288c has a frameshift in position 286, which disrupts the gene coding for this protein and produces two ORFs YML003W and YML002W. A contiguous sequence for a S.cerevisiae UPF0507 family protein can be found in strain YJM789 (AC A6ZM60).</text>
</comment>
<accession>P0CF16</accession>
<accession>D6VZH2</accession>
<accession>Q03665</accession>
<accession>Q04257</accession>
<accession>Q04263</accession>
<accession>Q6B2L5</accession>
<accession>Q6WV03</accession>
<proteinExistence type="inferred from homology"/>
<protein>
    <recommendedName>
        <fullName>UPF0507 protein YML003W</fullName>
    </recommendedName>
</protein>
<name>U5071_YEAST</name>